<name>SYL_STAAR</name>
<reference key="1">
    <citation type="journal article" date="2004" name="Proc. Natl. Acad. Sci. U.S.A.">
        <title>Complete genomes of two clinical Staphylococcus aureus strains: evidence for the rapid evolution of virulence and drug resistance.</title>
        <authorList>
            <person name="Holden M.T.G."/>
            <person name="Feil E.J."/>
            <person name="Lindsay J.A."/>
            <person name="Peacock S.J."/>
            <person name="Day N.P.J."/>
            <person name="Enright M.C."/>
            <person name="Foster T.J."/>
            <person name="Moore C.E."/>
            <person name="Hurst L."/>
            <person name="Atkin R."/>
            <person name="Barron A."/>
            <person name="Bason N."/>
            <person name="Bentley S.D."/>
            <person name="Chillingworth C."/>
            <person name="Chillingworth T."/>
            <person name="Churcher C."/>
            <person name="Clark L."/>
            <person name="Corton C."/>
            <person name="Cronin A."/>
            <person name="Doggett J."/>
            <person name="Dowd L."/>
            <person name="Feltwell T."/>
            <person name="Hance Z."/>
            <person name="Harris B."/>
            <person name="Hauser H."/>
            <person name="Holroyd S."/>
            <person name="Jagels K."/>
            <person name="James K.D."/>
            <person name="Lennard N."/>
            <person name="Line A."/>
            <person name="Mayes R."/>
            <person name="Moule S."/>
            <person name="Mungall K."/>
            <person name="Ormond D."/>
            <person name="Quail M.A."/>
            <person name="Rabbinowitsch E."/>
            <person name="Rutherford K.M."/>
            <person name="Sanders M."/>
            <person name="Sharp S."/>
            <person name="Simmonds M."/>
            <person name="Stevens K."/>
            <person name="Whitehead S."/>
            <person name="Barrell B.G."/>
            <person name="Spratt B.G."/>
            <person name="Parkhill J."/>
        </authorList>
    </citation>
    <scope>NUCLEOTIDE SEQUENCE [LARGE SCALE GENOMIC DNA]</scope>
    <source>
        <strain>MRSA252</strain>
    </source>
</reference>
<keyword id="KW-0030">Aminoacyl-tRNA synthetase</keyword>
<keyword id="KW-0067">ATP-binding</keyword>
<keyword id="KW-0963">Cytoplasm</keyword>
<keyword id="KW-0436">Ligase</keyword>
<keyword id="KW-0547">Nucleotide-binding</keyword>
<keyword id="KW-0648">Protein biosynthesis</keyword>
<comment type="catalytic activity">
    <reaction evidence="1">
        <text>tRNA(Leu) + L-leucine + ATP = L-leucyl-tRNA(Leu) + AMP + diphosphate</text>
        <dbReference type="Rhea" id="RHEA:11688"/>
        <dbReference type="Rhea" id="RHEA-COMP:9613"/>
        <dbReference type="Rhea" id="RHEA-COMP:9622"/>
        <dbReference type="ChEBI" id="CHEBI:30616"/>
        <dbReference type="ChEBI" id="CHEBI:33019"/>
        <dbReference type="ChEBI" id="CHEBI:57427"/>
        <dbReference type="ChEBI" id="CHEBI:78442"/>
        <dbReference type="ChEBI" id="CHEBI:78494"/>
        <dbReference type="ChEBI" id="CHEBI:456215"/>
        <dbReference type="EC" id="6.1.1.4"/>
    </reaction>
</comment>
<comment type="subcellular location">
    <subcellularLocation>
        <location evidence="1">Cytoplasm</location>
    </subcellularLocation>
</comment>
<comment type="similarity">
    <text evidence="1">Belongs to the class-I aminoacyl-tRNA synthetase family.</text>
</comment>
<dbReference type="EC" id="6.1.1.4" evidence="1"/>
<dbReference type="EMBL" id="BX571856">
    <property type="protein sequence ID" value="CAG40834.1"/>
    <property type="molecule type" value="Genomic_DNA"/>
</dbReference>
<dbReference type="SMR" id="Q6GFU3"/>
<dbReference type="KEGG" id="sar:SAR1843"/>
<dbReference type="HOGENOM" id="CLU_004427_0_0_9"/>
<dbReference type="Proteomes" id="UP000000596">
    <property type="component" value="Chromosome"/>
</dbReference>
<dbReference type="GO" id="GO:0005829">
    <property type="term" value="C:cytosol"/>
    <property type="evidence" value="ECO:0007669"/>
    <property type="project" value="TreeGrafter"/>
</dbReference>
<dbReference type="GO" id="GO:0002161">
    <property type="term" value="F:aminoacyl-tRNA deacylase activity"/>
    <property type="evidence" value="ECO:0007669"/>
    <property type="project" value="InterPro"/>
</dbReference>
<dbReference type="GO" id="GO:0005524">
    <property type="term" value="F:ATP binding"/>
    <property type="evidence" value="ECO:0007669"/>
    <property type="project" value="UniProtKB-UniRule"/>
</dbReference>
<dbReference type="GO" id="GO:0004823">
    <property type="term" value="F:leucine-tRNA ligase activity"/>
    <property type="evidence" value="ECO:0007669"/>
    <property type="project" value="UniProtKB-UniRule"/>
</dbReference>
<dbReference type="GO" id="GO:0006429">
    <property type="term" value="P:leucyl-tRNA aminoacylation"/>
    <property type="evidence" value="ECO:0007669"/>
    <property type="project" value="UniProtKB-UniRule"/>
</dbReference>
<dbReference type="CDD" id="cd07958">
    <property type="entry name" value="Anticodon_Ia_Leu_BEm"/>
    <property type="match status" value="1"/>
</dbReference>
<dbReference type="CDD" id="cd00812">
    <property type="entry name" value="LeuRS_core"/>
    <property type="match status" value="1"/>
</dbReference>
<dbReference type="FunFam" id="1.10.730.10:FF:000012">
    <property type="entry name" value="Leucine--tRNA ligase"/>
    <property type="match status" value="1"/>
</dbReference>
<dbReference type="FunFam" id="1.10.730.10:FF:000018">
    <property type="entry name" value="Leucine--tRNA ligase"/>
    <property type="match status" value="1"/>
</dbReference>
<dbReference type="FunFam" id="3.10.20.590:FF:000001">
    <property type="entry name" value="Leucine--tRNA ligase"/>
    <property type="match status" value="1"/>
</dbReference>
<dbReference type="FunFam" id="3.40.50.620:FF:000056">
    <property type="entry name" value="Leucine--tRNA ligase"/>
    <property type="match status" value="1"/>
</dbReference>
<dbReference type="FunFam" id="3.40.50.620:FF:000077">
    <property type="entry name" value="Leucine--tRNA ligase"/>
    <property type="match status" value="1"/>
</dbReference>
<dbReference type="Gene3D" id="3.10.20.590">
    <property type="match status" value="1"/>
</dbReference>
<dbReference type="Gene3D" id="3.40.50.620">
    <property type="entry name" value="HUPs"/>
    <property type="match status" value="2"/>
</dbReference>
<dbReference type="Gene3D" id="1.10.730.10">
    <property type="entry name" value="Isoleucyl-tRNA Synthetase, Domain 1"/>
    <property type="match status" value="1"/>
</dbReference>
<dbReference type="HAMAP" id="MF_00049_B">
    <property type="entry name" value="Leu_tRNA_synth_B"/>
    <property type="match status" value="1"/>
</dbReference>
<dbReference type="InterPro" id="IPR001412">
    <property type="entry name" value="aa-tRNA-synth_I_CS"/>
</dbReference>
<dbReference type="InterPro" id="IPR002300">
    <property type="entry name" value="aa-tRNA-synth_Ia"/>
</dbReference>
<dbReference type="InterPro" id="IPR002302">
    <property type="entry name" value="Leu-tRNA-ligase"/>
</dbReference>
<dbReference type="InterPro" id="IPR025709">
    <property type="entry name" value="Leu_tRNA-synth_edit"/>
</dbReference>
<dbReference type="InterPro" id="IPR013155">
    <property type="entry name" value="M/V/L/I-tRNA-synth_anticd-bd"/>
</dbReference>
<dbReference type="InterPro" id="IPR015413">
    <property type="entry name" value="Methionyl/Leucyl_tRNA_Synth"/>
</dbReference>
<dbReference type="InterPro" id="IPR014729">
    <property type="entry name" value="Rossmann-like_a/b/a_fold"/>
</dbReference>
<dbReference type="InterPro" id="IPR009080">
    <property type="entry name" value="tRNAsynth_Ia_anticodon-bd"/>
</dbReference>
<dbReference type="InterPro" id="IPR009008">
    <property type="entry name" value="Val/Leu/Ile-tRNA-synth_edit"/>
</dbReference>
<dbReference type="NCBIfam" id="TIGR00396">
    <property type="entry name" value="leuS_bact"/>
    <property type="match status" value="1"/>
</dbReference>
<dbReference type="PANTHER" id="PTHR43740:SF2">
    <property type="entry name" value="LEUCINE--TRNA LIGASE, MITOCHONDRIAL"/>
    <property type="match status" value="1"/>
</dbReference>
<dbReference type="PANTHER" id="PTHR43740">
    <property type="entry name" value="LEUCYL-TRNA SYNTHETASE"/>
    <property type="match status" value="1"/>
</dbReference>
<dbReference type="Pfam" id="PF08264">
    <property type="entry name" value="Anticodon_1"/>
    <property type="match status" value="1"/>
</dbReference>
<dbReference type="Pfam" id="PF00133">
    <property type="entry name" value="tRNA-synt_1"/>
    <property type="match status" value="1"/>
</dbReference>
<dbReference type="Pfam" id="PF13603">
    <property type="entry name" value="tRNA-synt_1_2"/>
    <property type="match status" value="1"/>
</dbReference>
<dbReference type="Pfam" id="PF09334">
    <property type="entry name" value="tRNA-synt_1g"/>
    <property type="match status" value="1"/>
</dbReference>
<dbReference type="PRINTS" id="PR00985">
    <property type="entry name" value="TRNASYNTHLEU"/>
</dbReference>
<dbReference type="SUPFAM" id="SSF47323">
    <property type="entry name" value="Anticodon-binding domain of a subclass of class I aminoacyl-tRNA synthetases"/>
    <property type="match status" value="1"/>
</dbReference>
<dbReference type="SUPFAM" id="SSF52374">
    <property type="entry name" value="Nucleotidylyl transferase"/>
    <property type="match status" value="1"/>
</dbReference>
<dbReference type="SUPFAM" id="SSF50677">
    <property type="entry name" value="ValRS/IleRS/LeuRS editing domain"/>
    <property type="match status" value="1"/>
</dbReference>
<dbReference type="PROSITE" id="PS00178">
    <property type="entry name" value="AA_TRNA_LIGASE_I"/>
    <property type="match status" value="1"/>
</dbReference>
<sequence>MNYNHNQIEKKWQDYWDENKTFKTNDNLGQKKFYALDMFPYPSGAGLHVGHPEGYTATDIISRYKRMQGYNVLHPMGWDAFGLPAEQYALDTGNDPREFTKKNIQTFKRQIKELGFSYDWDREVNTTDPEYYKWTQWIFIQLYNKGLAYVDEVAVNWCPALGTVLSNEEVIDGVSERGGHPVYRKPMKQWVLKITEYADQLLADLDDLDWPESLKDMQRNWIGRSEGAKVSFDVDNSEGKVEVFTTRPDTIYGASFLVLSPEHALVDSITTDEYKDQVKAYQTEASKKSDLERTDLAKDKSGVFTGAYAINPLSGEKVQIWIADYVLSTYGTGAIMAVPAHDDRDYEFAKKFDLPIIEVIEGGNVEEAAYTGEGKHINSGELDGLENEAAITKAIQLLEKKGAGEKKVNYKLRDWLFSRQRYWGEPIPVIHWEDGTMTTVPEEELPLLLPETDEIKPSGTGESPLANIDSFVNVVDEKTGMKGRRETNTMPQWAGSCWYYLRYIDPKNENMLADPEKLKHWLPVDLYIGGVEHAVLHLLYARFWHKVLYDLGIVPTKEPFQKLFNQGMILGEGNEKMSKSKGNVINPDDIVQSHGADTLRLYEMFMGPLDAAIAWSEKGLDGSRRFLDRVWRLMVNEDGTLSSKIVTTNNKSLDKVYNQTVKKVTEDFETLGFNTAISQLMVFINECYKVDEVYKPYIEGFVKMLAPIAPHIGEELWSKLGHEESITYQPWPTYDEALLVDDEVEIVVQVNGKLRAKIKIAKDTSKEEMQEIALSNDNVKASIEGKDIMKVIAVPQKLVNIVAK</sequence>
<organism>
    <name type="scientific">Staphylococcus aureus (strain MRSA252)</name>
    <dbReference type="NCBI Taxonomy" id="282458"/>
    <lineage>
        <taxon>Bacteria</taxon>
        <taxon>Bacillati</taxon>
        <taxon>Bacillota</taxon>
        <taxon>Bacilli</taxon>
        <taxon>Bacillales</taxon>
        <taxon>Staphylococcaceae</taxon>
        <taxon>Staphylococcus</taxon>
    </lineage>
</organism>
<protein>
    <recommendedName>
        <fullName evidence="1">Leucine--tRNA ligase</fullName>
        <ecNumber evidence="1">6.1.1.4</ecNumber>
    </recommendedName>
    <alternativeName>
        <fullName evidence="1">Leucyl-tRNA synthetase</fullName>
        <shortName evidence="1">LeuRS</shortName>
    </alternativeName>
</protein>
<feature type="chain" id="PRO_0000152085" description="Leucine--tRNA ligase">
    <location>
        <begin position="1"/>
        <end position="804"/>
    </location>
</feature>
<feature type="short sequence motif" description="'HIGH' region">
    <location>
        <begin position="40"/>
        <end position="51"/>
    </location>
</feature>
<feature type="short sequence motif" description="'KMSKS' region">
    <location>
        <begin position="576"/>
        <end position="580"/>
    </location>
</feature>
<feature type="binding site" evidence="1">
    <location>
        <position position="579"/>
    </location>
    <ligand>
        <name>ATP</name>
        <dbReference type="ChEBI" id="CHEBI:30616"/>
    </ligand>
</feature>
<accession>Q6GFU3</accession>
<evidence type="ECO:0000255" key="1">
    <source>
        <dbReference type="HAMAP-Rule" id="MF_00049"/>
    </source>
</evidence>
<gene>
    <name evidence="1" type="primary">leuS</name>
    <name type="ordered locus">SAR1843</name>
</gene>
<proteinExistence type="inferred from homology"/>